<proteinExistence type="evidence at transcript level"/>
<protein>
    <recommendedName>
        <fullName>Transcription factor LBX1</fullName>
    </recommendedName>
    <alternativeName>
        <fullName>Ladybird homeobox protein homolog 1</fullName>
    </alternativeName>
</protein>
<evidence type="ECO:0000250" key="1">
    <source>
        <dbReference type="UniProtKB" id="Q2PYN8"/>
    </source>
</evidence>
<evidence type="ECO:0000255" key="2">
    <source>
        <dbReference type="PROSITE-ProRule" id="PRU00108"/>
    </source>
</evidence>
<evidence type="ECO:0000256" key="3">
    <source>
        <dbReference type="SAM" id="MobiDB-lite"/>
    </source>
</evidence>
<evidence type="ECO:0000305" key="4"/>
<evidence type="ECO:0000312" key="5">
    <source>
        <dbReference type="EMBL" id="AAI22078.1"/>
    </source>
</evidence>
<dbReference type="EMBL" id="BC122077">
    <property type="protein sequence ID" value="AAI22078.1"/>
    <property type="molecule type" value="mRNA"/>
</dbReference>
<dbReference type="RefSeq" id="NP_001072559.1">
    <property type="nucleotide sequence ID" value="NM_001079091.1"/>
</dbReference>
<dbReference type="SMR" id="Q0P4H6"/>
<dbReference type="FunCoup" id="Q0P4H6">
    <property type="interactions" value="311"/>
</dbReference>
<dbReference type="DNASU" id="780014"/>
<dbReference type="GeneID" id="780014"/>
<dbReference type="KEGG" id="xtr:780014"/>
<dbReference type="AGR" id="Xenbase:XB-GENE-6455157"/>
<dbReference type="CTD" id="10660"/>
<dbReference type="Xenbase" id="XB-GENE-6455157">
    <property type="gene designation" value="lbx1"/>
</dbReference>
<dbReference type="InParanoid" id="Q0P4H6"/>
<dbReference type="OMA" id="THPKHGL"/>
<dbReference type="OrthoDB" id="6159439at2759"/>
<dbReference type="Proteomes" id="UP000008143">
    <property type="component" value="Chromosome 7"/>
</dbReference>
<dbReference type="Bgee" id="ENSXETG00000040868">
    <property type="expression patterns" value="Expressed in skeletal muscle tissue and 4 other cell types or tissues"/>
</dbReference>
<dbReference type="GO" id="GO:0005634">
    <property type="term" value="C:nucleus"/>
    <property type="evidence" value="ECO:0007669"/>
    <property type="project" value="UniProtKB-SubCell"/>
</dbReference>
<dbReference type="GO" id="GO:0005667">
    <property type="term" value="C:transcription regulator complex"/>
    <property type="evidence" value="ECO:0000250"/>
    <property type="project" value="UniProtKB"/>
</dbReference>
<dbReference type="GO" id="GO:0003677">
    <property type="term" value="F:DNA binding"/>
    <property type="evidence" value="ECO:0007669"/>
    <property type="project" value="UniProtKB-KW"/>
</dbReference>
<dbReference type="GO" id="GO:0003700">
    <property type="term" value="F:DNA-binding transcription factor activity"/>
    <property type="evidence" value="ECO:0000250"/>
    <property type="project" value="UniProtKB"/>
</dbReference>
<dbReference type="GO" id="GO:0000981">
    <property type="term" value="F:DNA-binding transcription factor activity, RNA polymerase II-specific"/>
    <property type="evidence" value="ECO:0007669"/>
    <property type="project" value="InterPro"/>
</dbReference>
<dbReference type="GO" id="GO:0030154">
    <property type="term" value="P:cell differentiation"/>
    <property type="evidence" value="ECO:0007669"/>
    <property type="project" value="UniProtKB-KW"/>
</dbReference>
<dbReference type="GO" id="GO:0007517">
    <property type="term" value="P:muscle organ development"/>
    <property type="evidence" value="ECO:0000250"/>
    <property type="project" value="UniProtKB"/>
</dbReference>
<dbReference type="GO" id="GO:0051450">
    <property type="term" value="P:myoblast proliferation"/>
    <property type="evidence" value="ECO:0000250"/>
    <property type="project" value="UniProtKB"/>
</dbReference>
<dbReference type="GO" id="GO:0000122">
    <property type="term" value="P:negative regulation of transcription by RNA polymerase II"/>
    <property type="evidence" value="ECO:0000250"/>
    <property type="project" value="UniProtKB"/>
</dbReference>
<dbReference type="GO" id="GO:0006355">
    <property type="term" value="P:regulation of DNA-templated transcription"/>
    <property type="evidence" value="ECO:0000250"/>
    <property type="project" value="UniProtKB"/>
</dbReference>
<dbReference type="CDD" id="cd00086">
    <property type="entry name" value="homeodomain"/>
    <property type="match status" value="1"/>
</dbReference>
<dbReference type="FunFam" id="1.10.10.60:FF:000098">
    <property type="entry name" value="Transcription factor LBX1"/>
    <property type="match status" value="1"/>
</dbReference>
<dbReference type="Gene3D" id="1.10.10.60">
    <property type="entry name" value="Homeodomain-like"/>
    <property type="match status" value="1"/>
</dbReference>
<dbReference type="InterPro" id="IPR001356">
    <property type="entry name" value="HD"/>
</dbReference>
<dbReference type="InterPro" id="IPR017970">
    <property type="entry name" value="Homeobox_CS"/>
</dbReference>
<dbReference type="InterPro" id="IPR009057">
    <property type="entry name" value="Homeodomain-like_sf"/>
</dbReference>
<dbReference type="InterPro" id="IPR000047">
    <property type="entry name" value="HTH_motif"/>
</dbReference>
<dbReference type="InterPro" id="IPR051892">
    <property type="entry name" value="LBX_TF"/>
</dbReference>
<dbReference type="PANTHER" id="PTHR24336">
    <property type="entry name" value="TRANSCRIPTION FACTOR LBX"/>
    <property type="match status" value="1"/>
</dbReference>
<dbReference type="PANTHER" id="PTHR24336:SF9">
    <property type="entry name" value="TRANSCRIPTION FACTOR LBX1"/>
    <property type="match status" value="1"/>
</dbReference>
<dbReference type="Pfam" id="PF00046">
    <property type="entry name" value="Homeodomain"/>
    <property type="match status" value="1"/>
</dbReference>
<dbReference type="PRINTS" id="PR00031">
    <property type="entry name" value="HTHREPRESSR"/>
</dbReference>
<dbReference type="SMART" id="SM00389">
    <property type="entry name" value="HOX"/>
    <property type="match status" value="1"/>
</dbReference>
<dbReference type="SUPFAM" id="SSF46689">
    <property type="entry name" value="Homeodomain-like"/>
    <property type="match status" value="1"/>
</dbReference>
<dbReference type="PROSITE" id="PS00027">
    <property type="entry name" value="HOMEOBOX_1"/>
    <property type="match status" value="1"/>
</dbReference>
<dbReference type="PROSITE" id="PS50071">
    <property type="entry name" value="HOMEOBOX_2"/>
    <property type="match status" value="1"/>
</dbReference>
<name>LBX1_XENTR</name>
<accession>Q0P4H6</accession>
<feature type="chain" id="PRO_0000271251" description="Transcription factor LBX1">
    <location>
        <begin position="1"/>
        <end position="265"/>
    </location>
</feature>
<feature type="DNA-binding region" description="Homeobox" evidence="2">
    <location>
        <begin position="125"/>
        <end position="184"/>
    </location>
</feature>
<feature type="region of interest" description="Disordered" evidence="3">
    <location>
        <begin position="1"/>
        <end position="33"/>
    </location>
</feature>
<feature type="region of interest" description="Disordered" evidence="3">
    <location>
        <begin position="212"/>
        <end position="265"/>
    </location>
</feature>
<feature type="compositionally biased region" description="Basic and acidic residues" evidence="3">
    <location>
        <begin position="1"/>
        <end position="20"/>
    </location>
</feature>
<feature type="compositionally biased region" description="Acidic residues" evidence="3">
    <location>
        <begin position="253"/>
        <end position="265"/>
    </location>
</feature>
<reference evidence="5" key="1">
    <citation type="submission" date="2006-08" db="EMBL/GenBank/DDBJ databases">
        <authorList>
            <consortium name="NIH - Xenopus Gene Collection (XGC) project"/>
        </authorList>
    </citation>
    <scope>NUCLEOTIDE SEQUENCE [LARGE SCALE MRNA]</scope>
    <source>
        <strain evidence="5">N6</strain>
        <tissue evidence="5">Skeletal muscle</tissue>
    </source>
</reference>
<keyword id="KW-0217">Developmental protein</keyword>
<keyword id="KW-0221">Differentiation</keyword>
<keyword id="KW-0238">DNA-binding</keyword>
<keyword id="KW-0371">Homeobox</keyword>
<keyword id="KW-0517">Myogenesis</keyword>
<keyword id="KW-0539">Nucleus</keyword>
<keyword id="KW-1185">Reference proteome</keyword>
<keyword id="KW-0804">Transcription</keyword>
<keyword id="KW-0805">Transcription regulation</keyword>
<sequence length="265" mass="29608">MTSKDEAKSSSVEERRRHALDLLPPPANSNKPLTPFSIEDILNKPSVRRSYTICGTAHLLSTAEKPPAAGLPLSSRALLSQTSPLCALEELASKTFKGLEVSVLQAAEGRDGMTIFGQRQTPKKRRKSRTAFTNHQIYELEKRFLYQKYLSPADRDQIAQQLGLTNAQVITWFQNRRAKLKRDLEEMKADVESVKKMSPSTVEAVLTISELEEETNSVRDDSRSRSPQLGLSGHMPLSPSSPLTEQHTSKECSEDEEDVEIDVDD</sequence>
<gene>
    <name evidence="1" type="primary">lbx1</name>
</gene>
<organism>
    <name type="scientific">Xenopus tropicalis</name>
    <name type="common">Western clawed frog</name>
    <name type="synonym">Silurana tropicalis</name>
    <dbReference type="NCBI Taxonomy" id="8364"/>
    <lineage>
        <taxon>Eukaryota</taxon>
        <taxon>Metazoa</taxon>
        <taxon>Chordata</taxon>
        <taxon>Craniata</taxon>
        <taxon>Vertebrata</taxon>
        <taxon>Euteleostomi</taxon>
        <taxon>Amphibia</taxon>
        <taxon>Batrachia</taxon>
        <taxon>Anura</taxon>
        <taxon>Pipoidea</taxon>
        <taxon>Pipidae</taxon>
        <taxon>Xenopodinae</taxon>
        <taxon>Xenopus</taxon>
        <taxon>Silurana</taxon>
    </lineage>
</organism>
<comment type="function">
    <text evidence="1">Transcription factor that controls hypaxial muscle development by down-regulating myod1 and cdkn1b/p27, thereby allowing myoblasts to proliferate before the onset of terminal differentiation.</text>
</comment>
<comment type="subcellular location">
    <subcellularLocation>
        <location evidence="4">Nucleus</location>
    </subcellularLocation>
</comment>